<geneLocation type="chloroplast"/>
<gene>
    <name evidence="1" type="primary">rbcL</name>
</gene>
<protein>
    <recommendedName>
        <fullName evidence="1">Ribulose bisphosphate carboxylase large chain</fullName>
        <shortName evidence="1">RuBisCO large subunit</shortName>
        <ecNumber evidence="1">4.1.1.39</ecNumber>
    </recommendedName>
</protein>
<proteinExistence type="inferred from homology"/>
<keyword id="KW-0113">Calvin cycle</keyword>
<keyword id="KW-0120">Carbon dioxide fixation</keyword>
<keyword id="KW-0150">Chloroplast</keyword>
<keyword id="KW-1015">Disulfide bond</keyword>
<keyword id="KW-0456">Lyase</keyword>
<keyword id="KW-0460">Magnesium</keyword>
<keyword id="KW-0479">Metal-binding</keyword>
<keyword id="KW-0488">Methylation</keyword>
<keyword id="KW-0503">Monooxygenase</keyword>
<keyword id="KW-0560">Oxidoreductase</keyword>
<keyword id="KW-0601">Photorespiration</keyword>
<keyword id="KW-0602">Photosynthesis</keyword>
<keyword id="KW-0934">Plastid</keyword>
<accession>Q05987</accession>
<reference key="1">
    <citation type="journal article" date="1992" name="Ann. Mo. Bot. Gard.">
        <title>Monophyly of the Asteridae and identification of their major lineages inferred from DNA sequences of rbcL.</title>
        <authorList>
            <person name="Olmstead R.G."/>
            <person name="Michaels H.J."/>
            <person name="Scott K.M."/>
            <person name="Palmer J.D."/>
        </authorList>
        <dbReference type="AGRICOLA" id="IND93014998"/>
    </citation>
    <scope>NUCLEOTIDE SEQUENCE [GENOMIC DNA]</scope>
</reference>
<name>RBL_CERJA</name>
<organism>
    <name type="scientific">Cercidiphyllum japonicum</name>
    <name type="common">Katsura tree</name>
    <dbReference type="NCBI Taxonomy" id="13413"/>
    <lineage>
        <taxon>Eukaryota</taxon>
        <taxon>Viridiplantae</taxon>
        <taxon>Streptophyta</taxon>
        <taxon>Embryophyta</taxon>
        <taxon>Tracheophyta</taxon>
        <taxon>Spermatophyta</taxon>
        <taxon>Magnoliopsida</taxon>
        <taxon>eudicotyledons</taxon>
        <taxon>Gunneridae</taxon>
        <taxon>Pentapetalae</taxon>
        <taxon>Saxifragales</taxon>
        <taxon>Cercidiphyllaceae</taxon>
        <taxon>Cercidiphyllum</taxon>
    </lineage>
</organism>
<comment type="function">
    <text evidence="1">RuBisCO catalyzes two reactions: the carboxylation of D-ribulose 1,5-bisphosphate, the primary event in carbon dioxide fixation, as well as the oxidative fragmentation of the pentose substrate in the photorespiration process. Both reactions occur simultaneously and in competition at the same active site.</text>
</comment>
<comment type="catalytic activity">
    <reaction evidence="1">
        <text>2 (2R)-3-phosphoglycerate + 2 H(+) = D-ribulose 1,5-bisphosphate + CO2 + H2O</text>
        <dbReference type="Rhea" id="RHEA:23124"/>
        <dbReference type="ChEBI" id="CHEBI:15377"/>
        <dbReference type="ChEBI" id="CHEBI:15378"/>
        <dbReference type="ChEBI" id="CHEBI:16526"/>
        <dbReference type="ChEBI" id="CHEBI:57870"/>
        <dbReference type="ChEBI" id="CHEBI:58272"/>
        <dbReference type="EC" id="4.1.1.39"/>
    </reaction>
</comment>
<comment type="catalytic activity">
    <reaction evidence="1">
        <text>D-ribulose 1,5-bisphosphate + O2 = 2-phosphoglycolate + (2R)-3-phosphoglycerate + 2 H(+)</text>
        <dbReference type="Rhea" id="RHEA:36631"/>
        <dbReference type="ChEBI" id="CHEBI:15378"/>
        <dbReference type="ChEBI" id="CHEBI:15379"/>
        <dbReference type="ChEBI" id="CHEBI:57870"/>
        <dbReference type="ChEBI" id="CHEBI:58033"/>
        <dbReference type="ChEBI" id="CHEBI:58272"/>
    </reaction>
</comment>
<comment type="cofactor">
    <cofactor evidence="1">
        <name>Mg(2+)</name>
        <dbReference type="ChEBI" id="CHEBI:18420"/>
    </cofactor>
    <text evidence="1">Binds 1 Mg(2+) ion per subunit.</text>
</comment>
<comment type="subunit">
    <text evidence="1">Heterohexadecamer of 8 large chains and 8 small chains; disulfide-linked. The disulfide link is formed within the large subunit homodimers.</text>
</comment>
<comment type="subcellular location">
    <subcellularLocation>
        <location>Plastid</location>
        <location>Chloroplast</location>
    </subcellularLocation>
</comment>
<comment type="PTM">
    <text evidence="1">The disulfide bond which can form in the large chain dimeric partners within the hexadecamer appears to be associated with oxidative stress and protein turnover.</text>
</comment>
<comment type="miscellaneous">
    <text evidence="1">The basic functional RuBisCO is composed of a large chain homodimer in a 'head-to-tail' conformation. In form I RuBisCO this homodimer is arranged in a barrel-like tetramer with the small subunits forming a tetrameric 'cap' on each end of the 'barrel'.</text>
</comment>
<comment type="similarity">
    <text evidence="1">Belongs to the RuBisCO large chain family. Type I subfamily.</text>
</comment>
<evidence type="ECO:0000255" key="1">
    <source>
        <dbReference type="HAMAP-Rule" id="MF_01338"/>
    </source>
</evidence>
<dbReference type="EC" id="4.1.1.39" evidence="1"/>
<dbReference type="EMBL" id="L11673">
    <property type="protein sequence ID" value="AAA87377.1"/>
    <property type="molecule type" value="Genomic_DNA"/>
</dbReference>
<dbReference type="GO" id="GO:0009507">
    <property type="term" value="C:chloroplast"/>
    <property type="evidence" value="ECO:0007669"/>
    <property type="project" value="UniProtKB-SubCell"/>
</dbReference>
<dbReference type="GO" id="GO:0000287">
    <property type="term" value="F:magnesium ion binding"/>
    <property type="evidence" value="ECO:0007669"/>
    <property type="project" value="InterPro"/>
</dbReference>
<dbReference type="GO" id="GO:0004497">
    <property type="term" value="F:monooxygenase activity"/>
    <property type="evidence" value="ECO:0007669"/>
    <property type="project" value="UniProtKB-KW"/>
</dbReference>
<dbReference type="GO" id="GO:0016984">
    <property type="term" value="F:ribulose-bisphosphate carboxylase activity"/>
    <property type="evidence" value="ECO:0007669"/>
    <property type="project" value="UniProtKB-EC"/>
</dbReference>
<dbReference type="GO" id="GO:0009853">
    <property type="term" value="P:photorespiration"/>
    <property type="evidence" value="ECO:0007669"/>
    <property type="project" value="UniProtKB-KW"/>
</dbReference>
<dbReference type="GO" id="GO:0019253">
    <property type="term" value="P:reductive pentose-phosphate cycle"/>
    <property type="evidence" value="ECO:0007669"/>
    <property type="project" value="UniProtKB-KW"/>
</dbReference>
<dbReference type="CDD" id="cd08212">
    <property type="entry name" value="RuBisCO_large_I"/>
    <property type="match status" value="1"/>
</dbReference>
<dbReference type="FunFam" id="3.20.20.110:FF:000001">
    <property type="entry name" value="Ribulose bisphosphate carboxylase large chain"/>
    <property type="match status" value="1"/>
</dbReference>
<dbReference type="FunFam" id="3.30.70.150:FF:000001">
    <property type="entry name" value="Ribulose bisphosphate carboxylase large chain"/>
    <property type="match status" value="1"/>
</dbReference>
<dbReference type="Gene3D" id="3.20.20.110">
    <property type="entry name" value="Ribulose bisphosphate carboxylase, large subunit, C-terminal domain"/>
    <property type="match status" value="1"/>
</dbReference>
<dbReference type="Gene3D" id="3.30.70.150">
    <property type="entry name" value="RuBisCO large subunit, N-terminal domain"/>
    <property type="match status" value="1"/>
</dbReference>
<dbReference type="HAMAP" id="MF_01338">
    <property type="entry name" value="RuBisCO_L_type1"/>
    <property type="match status" value="1"/>
</dbReference>
<dbReference type="InterPro" id="IPR033966">
    <property type="entry name" value="RuBisCO"/>
</dbReference>
<dbReference type="InterPro" id="IPR020878">
    <property type="entry name" value="RuBisCo_large_chain_AS"/>
</dbReference>
<dbReference type="InterPro" id="IPR000685">
    <property type="entry name" value="RuBisCO_lsu_C"/>
</dbReference>
<dbReference type="InterPro" id="IPR036376">
    <property type="entry name" value="RuBisCO_lsu_C_sf"/>
</dbReference>
<dbReference type="InterPro" id="IPR017443">
    <property type="entry name" value="RuBisCO_lsu_fd_N"/>
</dbReference>
<dbReference type="InterPro" id="IPR036422">
    <property type="entry name" value="RuBisCO_lsu_N_sf"/>
</dbReference>
<dbReference type="InterPro" id="IPR020888">
    <property type="entry name" value="RuBisCO_lsuI"/>
</dbReference>
<dbReference type="NCBIfam" id="NF003252">
    <property type="entry name" value="PRK04208.1"/>
    <property type="match status" value="1"/>
</dbReference>
<dbReference type="PANTHER" id="PTHR42704">
    <property type="entry name" value="RIBULOSE BISPHOSPHATE CARBOXYLASE"/>
    <property type="match status" value="1"/>
</dbReference>
<dbReference type="PANTHER" id="PTHR42704:SF16">
    <property type="entry name" value="RIBULOSE BISPHOSPHATE CARBOXYLASE LARGE CHAIN"/>
    <property type="match status" value="1"/>
</dbReference>
<dbReference type="Pfam" id="PF00016">
    <property type="entry name" value="RuBisCO_large"/>
    <property type="match status" value="1"/>
</dbReference>
<dbReference type="Pfam" id="PF02788">
    <property type="entry name" value="RuBisCO_large_N"/>
    <property type="match status" value="1"/>
</dbReference>
<dbReference type="SFLD" id="SFLDG01052">
    <property type="entry name" value="RuBisCO"/>
    <property type="match status" value="1"/>
</dbReference>
<dbReference type="SFLD" id="SFLDS00014">
    <property type="entry name" value="RuBisCO"/>
    <property type="match status" value="1"/>
</dbReference>
<dbReference type="SFLD" id="SFLDG00301">
    <property type="entry name" value="RuBisCO-like_proteins"/>
    <property type="match status" value="1"/>
</dbReference>
<dbReference type="SUPFAM" id="SSF51649">
    <property type="entry name" value="RuBisCo, C-terminal domain"/>
    <property type="match status" value="1"/>
</dbReference>
<dbReference type="SUPFAM" id="SSF54966">
    <property type="entry name" value="RuBisCO, large subunit, small (N-terminal) domain"/>
    <property type="match status" value="1"/>
</dbReference>
<dbReference type="PROSITE" id="PS00157">
    <property type="entry name" value="RUBISCO_LARGE"/>
    <property type="match status" value="1"/>
</dbReference>
<sequence>SVGFKAGVKDYKLTYYTPDYETKDTDILAAFRVTPQPGVPPEEAGAAVAVESSTGTWTTVWTDGLTSLDRYKGRCYHIEPVAGEETQFIAYVAYPLDLFEEGSVXNMFTSIVGNVFGFKALRALRLEDLRIPVAYVKTFQGPPHAIQVERDKLNKYGRPLLGCTIKPKLGLSAKNYGRAVYECLRGGLDFTKDDENVNSQPFMRWRDRFLFCAEAIYKAQAETGEIKGHYLNATAGTCEEMIKRAVFARELGVPIVMHDYLTGGFTANTSLAHYCRDNGLLLHIHRAMHAVIDRQKNHGIHFRVLAKALRMSGGDHIHSGTVVGKLEGEREITLGFVDLLRDDFIEKDRSRGIYFTQDWVSLPGVLPVASGGIHVWHMPALTEIFGDDSVLQFGGGTLGHPWXKAPGAVAXRVALEACVQARNEGRDLAREGNEIIREASKWSPELAAACEVWKEIKFEFEAMDTL</sequence>
<feature type="chain" id="PRO_0000062406" description="Ribulose bisphosphate carboxylase large chain">
    <location>
        <begin position="1" status="less than"/>
        <end position="466"/>
    </location>
</feature>
<feature type="active site" description="Proton acceptor" evidence="1">
    <location>
        <position position="166"/>
    </location>
</feature>
<feature type="active site" description="Proton acceptor" evidence="1">
    <location>
        <position position="285"/>
    </location>
</feature>
<feature type="binding site" description="in homodimeric partner" evidence="1">
    <location>
        <position position="114"/>
    </location>
    <ligand>
        <name>substrate</name>
    </ligand>
</feature>
<feature type="binding site" evidence="1">
    <location>
        <position position="164"/>
    </location>
    <ligand>
        <name>substrate</name>
    </ligand>
</feature>
<feature type="binding site" evidence="1">
    <location>
        <position position="168"/>
    </location>
    <ligand>
        <name>substrate</name>
    </ligand>
</feature>
<feature type="binding site" description="via carbamate group" evidence="1">
    <location>
        <position position="192"/>
    </location>
    <ligand>
        <name>Mg(2+)</name>
        <dbReference type="ChEBI" id="CHEBI:18420"/>
    </ligand>
</feature>
<feature type="binding site" evidence="1">
    <location>
        <position position="194"/>
    </location>
    <ligand>
        <name>Mg(2+)</name>
        <dbReference type="ChEBI" id="CHEBI:18420"/>
    </ligand>
</feature>
<feature type="binding site" evidence="1">
    <location>
        <position position="195"/>
    </location>
    <ligand>
        <name>Mg(2+)</name>
        <dbReference type="ChEBI" id="CHEBI:18420"/>
    </ligand>
</feature>
<feature type="binding site" evidence="1">
    <location>
        <position position="286"/>
    </location>
    <ligand>
        <name>substrate</name>
    </ligand>
</feature>
<feature type="binding site" evidence="1">
    <location>
        <position position="318"/>
    </location>
    <ligand>
        <name>substrate</name>
    </ligand>
</feature>
<feature type="binding site" evidence="1">
    <location>
        <position position="370"/>
    </location>
    <ligand>
        <name>substrate</name>
    </ligand>
</feature>
<feature type="site" description="Transition state stabilizer" evidence="1">
    <location>
        <position position="325"/>
    </location>
</feature>
<feature type="modified residue" description="N6,N6,N6-trimethyllysine" evidence="1">
    <location>
        <position position="5"/>
    </location>
</feature>
<feature type="modified residue" description="N6-carboxylysine" evidence="1">
    <location>
        <position position="192"/>
    </location>
</feature>
<feature type="disulfide bond" description="Interchain; in linked form" evidence="1">
    <location>
        <position position="238"/>
    </location>
</feature>
<feature type="non-terminal residue">
    <location>
        <position position="1"/>
    </location>
</feature>